<protein>
    <recommendedName>
        <fullName>Lantibiotic mutacin B-Ny266</fullName>
    </recommendedName>
</protein>
<evidence type="ECO:0000269" key="1">
    <source>
    </source>
</evidence>
<evidence type="ECO:0000305" key="2"/>
<comment type="function">
    <text>Lanthionine-containing peptide antibiotic (lantibiotic) active on Gram-positive bacteria. The bactericidal activity of lantibiotics is based on depolarization of energized bacterial cytoplasmic membranes, initiated by the formation of aqueous transmembrane pores.</text>
</comment>
<comment type="PTM">
    <text>Maturation of lantibiotics involves the enzymatic conversion of Thr, and Ser into dehydrated AA and the formation of thioether bonds with cysteine. The C-terminal lanthionine undergoes decarboxylation. This is followed by membrane translocation and cleavage of the modified precursor.</text>
</comment>
<comment type="PTM">
    <text evidence="1">It is not established whether the 2,3-didehydrobutyrine is the E- or Z-isomer.</text>
</comment>
<comment type="mass spectrometry"/>
<comment type="similarity">
    <text evidence="2">Belongs to the type A lantibiotic family.</text>
</comment>
<feature type="peptide" id="PRO_0000043969" description="Lantibiotic mutacin B-Ny266">
    <location>
        <begin position="1"/>
        <end position="22"/>
    </location>
</feature>
<feature type="modified residue" description="2,3-didehydroalanine (Ser)" evidence="1">
    <location>
        <position position="5"/>
    </location>
</feature>
<feature type="modified residue" description="2,3-didehydrobutyrine" evidence="1">
    <location>
        <position position="14"/>
    </location>
</feature>
<feature type="cross-link" description="Lanthionine (Ser-Cys)" evidence="1">
    <location>
        <begin position="3"/>
        <end position="7"/>
    </location>
</feature>
<feature type="cross-link" description="Beta-methyllanthionine (Thr-Cys)" evidence="1">
    <location>
        <begin position="8"/>
        <end position="11"/>
    </location>
</feature>
<feature type="cross-link" description="Lanthionine (Ser-Cys)" evidence="1">
    <location>
        <begin position="16"/>
        <end position="21"/>
    </location>
</feature>
<feature type="cross-link" description="S-(2-aminovinyl)-D-cysteine (Ser-Cys)" evidence="1">
    <location>
        <begin position="19"/>
        <end position="22"/>
    </location>
</feature>
<accession>P80666</accession>
<sequence>FKSWSFCTPGCAKTGSFNSYCC</sequence>
<organism>
    <name type="scientific">Streptococcus mutans</name>
    <dbReference type="NCBI Taxonomy" id="1309"/>
    <lineage>
        <taxon>Bacteria</taxon>
        <taxon>Bacillati</taxon>
        <taxon>Bacillota</taxon>
        <taxon>Bacilli</taxon>
        <taxon>Lactobacillales</taxon>
        <taxon>Streptococcaceae</taxon>
        <taxon>Streptococcus</taxon>
    </lineage>
</organism>
<reference key="1">
    <citation type="journal article" date="1997" name="FEBS Lett.">
        <title>Purification and structure of mutacin B-Ny266: a new lantibiotic produced by Streptococcus mutans.</title>
        <authorList>
            <person name="Mota-Meira M."/>
            <person name="Lacroix C."/>
            <person name="Lapointe G."/>
            <person name="Lavoie M.C."/>
        </authorList>
    </citation>
    <scope>PROTEIN SEQUENCE</scope>
    <scope>MASS SPECTROMETRY</scope>
    <scope>DEHYDRATION AT SER-5 AND THR-14</scope>
    <scope>LANTHIONINE CROSS-LINKS</scope>
    <source>
        <strain>Ny266</strain>
    </source>
</reference>
<proteinExistence type="evidence at protein level"/>
<dbReference type="TCDB" id="1.C.20.1.4">
    <property type="family name" value="the nisin (nisin) family"/>
</dbReference>
<dbReference type="GO" id="GO:0005576">
    <property type="term" value="C:extracellular region"/>
    <property type="evidence" value="ECO:0007669"/>
    <property type="project" value="InterPro"/>
</dbReference>
<dbReference type="GO" id="GO:0005102">
    <property type="term" value="F:signaling receptor binding"/>
    <property type="evidence" value="ECO:0007669"/>
    <property type="project" value="UniProtKB-KW"/>
</dbReference>
<dbReference type="GO" id="GO:0042742">
    <property type="term" value="P:defense response to bacterium"/>
    <property type="evidence" value="ECO:0007669"/>
    <property type="project" value="UniProtKB-KW"/>
</dbReference>
<dbReference type="GO" id="GO:0031640">
    <property type="term" value="P:killing of cells of another organism"/>
    <property type="evidence" value="ECO:0007669"/>
    <property type="project" value="UniProtKB-KW"/>
</dbReference>
<dbReference type="InterPro" id="IPR006079">
    <property type="entry name" value="Lantibiotic_typ-A_Bacillales"/>
</dbReference>
<dbReference type="NCBIfam" id="TIGR03731">
    <property type="entry name" value="lantibio_gallid"/>
    <property type="match status" value="1"/>
</dbReference>
<dbReference type="Pfam" id="PF02052">
    <property type="entry name" value="Gallidermin"/>
    <property type="match status" value="1"/>
</dbReference>
<dbReference type="PRINTS" id="PR00323">
    <property type="entry name" value="GALLIDERMIN"/>
</dbReference>
<keyword id="KW-0044">Antibiotic</keyword>
<keyword id="KW-0929">Antimicrobial</keyword>
<keyword id="KW-0078">Bacteriocin</keyword>
<keyword id="KW-0208">D-amino acid</keyword>
<keyword id="KW-0903">Direct protein sequencing</keyword>
<keyword id="KW-0425">Lantibiotic</keyword>
<keyword id="KW-0614">Plasmid</keyword>
<keyword id="KW-0883">Thioether bond</keyword>
<name>LANM_STRMG</name>